<name>SC31A_CHICK</name>
<keyword id="KW-0963">Cytoplasm</keyword>
<keyword id="KW-0968">Cytoplasmic vesicle</keyword>
<keyword id="KW-0256">Endoplasmic reticulum</keyword>
<keyword id="KW-0931">ER-Golgi transport</keyword>
<keyword id="KW-0472">Membrane</keyword>
<keyword id="KW-0653">Protein transport</keyword>
<keyword id="KW-1185">Reference proteome</keyword>
<keyword id="KW-0677">Repeat</keyword>
<keyword id="KW-0813">Transport</keyword>
<keyword id="KW-0853">WD repeat</keyword>
<protein>
    <recommendedName>
        <fullName>Protein transport protein Sec31A</fullName>
    </recommendedName>
    <alternativeName>
        <fullName>SEC31-like protein 1</fullName>
    </alternativeName>
    <alternativeName>
        <fullName>SEC31-related protein A</fullName>
    </alternativeName>
</protein>
<accession>Q5F3X8</accession>
<proteinExistence type="evidence at transcript level"/>
<comment type="function">
    <text evidence="2 4">Component of the coat protein complex II (COPII) which promotes the formation of transport vesicles from the endoplasmic reticulum (ER). The coat has two main functions, the physical deformation of the endoplasmic reticulum membrane into vesicles and the selection of cargo molecules (By similarity).</text>
</comment>
<comment type="subunit">
    <text evidence="2 4">COPII is composed of at least 5 proteins: the SEC23/24 complex, the SEC13/31 complex and SAR1. SEC13 and SEC31 make a 2:2 tetramer that forms the edge element of the COPII outer coat. The tetramer self-assembles in multiple copies to form the complete polyhedral cage. Interacts (via WD 8) with SEC13 (By similarity).</text>
</comment>
<comment type="subcellular location">
    <subcellularLocation>
        <location evidence="4">Cytoplasm</location>
    </subcellularLocation>
    <subcellularLocation>
        <location evidence="4">Cytoplasmic vesicle</location>
        <location evidence="4">COPII-coated vesicle membrane</location>
        <topology evidence="4">Peripheral membrane protein</topology>
        <orientation evidence="4">Cytoplasmic side</orientation>
    </subcellularLocation>
    <subcellularLocation>
        <location evidence="4">Endoplasmic reticulum membrane</location>
        <topology evidence="1">Peripheral membrane protein</topology>
    </subcellularLocation>
    <text evidence="3 4">Associates with membranes in a GTP-dependent manner. Localizes to endoplasmic reticulum exit sites (ERES), also known as transitional endoplasmic reticulum (tER).</text>
</comment>
<comment type="similarity">
    <text evidence="7">Belongs to the WD repeat SEC31 family.</text>
</comment>
<reference key="1">
    <citation type="journal article" date="2005" name="Genome Biol.">
        <title>Full-length cDNAs from chicken bursal lymphocytes to facilitate gene function analysis.</title>
        <authorList>
            <person name="Caldwell R.B."/>
            <person name="Kierzek A.M."/>
            <person name="Arakawa H."/>
            <person name="Bezzubov Y."/>
            <person name="Zaim J."/>
            <person name="Fiedler P."/>
            <person name="Kutter S."/>
            <person name="Blagodatski A."/>
            <person name="Kostovska D."/>
            <person name="Koter M."/>
            <person name="Plachy J."/>
            <person name="Carninci P."/>
            <person name="Hayashizaki Y."/>
            <person name="Buerstedde J.-M."/>
        </authorList>
    </citation>
    <scope>NUCLEOTIDE SEQUENCE [LARGE SCALE MRNA]</scope>
    <source>
        <strain>CB</strain>
        <tissue>Bursa of Fabricius</tissue>
    </source>
</reference>
<sequence length="1227" mass="133470">MKLKEIDRTAMQAWSPAQQHPIYLATGTSAQQLDASFSTNASLEIFELDLSDPSLDMKSCATFSSAHRYHKLIWGPHSMTAGERVSGVLIAGGENGNVILYDPAKIIAGDTEVIIAQKDKHTGPVRALDVNMFQTNLVASGANESEIYIWDLNNFATPMTPGAKTQPLEDISCIAWNRQVQHILASASPSGRATVWDLRKNEPIIKVSDHNNRMHCSGLAWHPDVATQMVLASEDDRLPVIQMWDLRFTSSPLRVLESHTRGILAIAWSMADSELLLSCGKDAKILCSNPNTGEVLYELPTNMQWCFDIQWCPRNPAILSAASFDGRLRIYSIMGGSTDGLRQKHVDQLSSSFGNLDPFGTGQPLPPLQLPQQTAPQSVVLPLKKPPKWIRRPVGASFSFGGKLVTFENAKPQQQPGIDQQPQHHYVYVSQVVTEKEFLARSTQLQEAVQSEGFVSYCQKKVDMAQADFERNVWSFLKVNFEEDSRAKYLELLGYRKDDLKNKITSALNLNKECCADGELGEAPTESDVPLLNKGDEGQTAEEHFLGERAKDSKQETEDLGSERKTFNISVSGDVDGLITQALLTGNFESAVDLCLHDNRMADAIILAIAGGQELLSRTQEKYFSKIQSKITRLITAVVTKNWKEIVLSCDLQNWREALAAVLTYARPDEFAALCDLLGNRLESEGDSLLRTQACLCYICAGNVEKLVACWSKVQDGNSPLSLQDLIEKVVILRKAVQLTQAVDPNAVGALLAEKMSQYANLLAAQGSIAAALTFLPANTDQPDIVLLRDRLCRAQGELPAGQEAIKAPYERQPMPKDRAGPVAGQVPGPQASAQQYYQQGDKPPPPGFIMPGAINPSAPPQQATSPSYNMYSQAGTRPAYPQTYQTTQQYSFGTGETALYQPQQPVAAPASASYPSPASNTNPPYLPAAQPVPSPLYPGQPQPSPTSLNPASSFPPPPSGASFQHGRPGLPATSVAYALPTGPTGTLPAASDLPASQRTGPQNGWNDPPALNRAAKKKKVPDNFMPPVPITSPIMNPLADPQAQMQQPPAAPVGTPSFQPQQLSTGQQAPLGPYAPQALGPCVVPPTTFKPRTEGAPGAPIGNAIQALPTEKITKKPIPEEHLILKTTFEALIQRCLLSASDPQTKRKLDDANKRLEFLYDKLREQTLSPAIVSGLHNIVKSIETRNYVEGLNIHMHIVSTSNFSETSAFMPVLKVVLIQANKLGV</sequence>
<evidence type="ECO:0000250" key="1"/>
<evidence type="ECO:0000250" key="2">
    <source>
        <dbReference type="UniProtKB" id="O94979"/>
    </source>
</evidence>
<evidence type="ECO:0000250" key="3">
    <source>
        <dbReference type="UniProtKB" id="Q3UPL0"/>
    </source>
</evidence>
<evidence type="ECO:0000250" key="4">
    <source>
        <dbReference type="UniProtKB" id="Q9Z2Q1"/>
    </source>
</evidence>
<evidence type="ECO:0000255" key="5">
    <source>
        <dbReference type="PROSITE-ProRule" id="PRU00221"/>
    </source>
</evidence>
<evidence type="ECO:0000256" key="6">
    <source>
        <dbReference type="SAM" id="MobiDB-lite"/>
    </source>
</evidence>
<evidence type="ECO:0000305" key="7"/>
<dbReference type="EMBL" id="AJ851522">
    <property type="protein sequence ID" value="CAH65156.1"/>
    <property type="molecule type" value="mRNA"/>
</dbReference>
<dbReference type="RefSeq" id="NP_001026312.1">
    <property type="nucleotide sequence ID" value="NM_001031141.1"/>
</dbReference>
<dbReference type="SMR" id="Q5F3X8"/>
<dbReference type="FunCoup" id="Q5F3X8">
    <property type="interactions" value="3407"/>
</dbReference>
<dbReference type="STRING" id="9031.ENSGALP00000070610"/>
<dbReference type="GlyGen" id="Q5F3X8">
    <property type="glycosylation" value="3 sites"/>
</dbReference>
<dbReference type="PaxDb" id="9031-ENSGALP00000041556"/>
<dbReference type="GeneID" id="422597"/>
<dbReference type="KEGG" id="gga:422597"/>
<dbReference type="CTD" id="22872"/>
<dbReference type="VEuPathDB" id="HostDB:geneid_422597"/>
<dbReference type="eggNOG" id="KOG0307">
    <property type="taxonomic scope" value="Eukaryota"/>
</dbReference>
<dbReference type="InParanoid" id="Q5F3X8"/>
<dbReference type="OrthoDB" id="542917at2759"/>
<dbReference type="PhylomeDB" id="Q5F3X8"/>
<dbReference type="PRO" id="PR:Q5F3X8"/>
<dbReference type="Proteomes" id="UP000000539">
    <property type="component" value="Unassembled WGS sequence"/>
</dbReference>
<dbReference type="GO" id="GO:0030127">
    <property type="term" value="C:COPII vesicle coat"/>
    <property type="evidence" value="ECO:0000250"/>
    <property type="project" value="UniProtKB"/>
</dbReference>
<dbReference type="GO" id="GO:0030134">
    <property type="term" value="C:COPII-coated ER to Golgi transport vesicle"/>
    <property type="evidence" value="ECO:0000250"/>
    <property type="project" value="UniProtKB"/>
</dbReference>
<dbReference type="GO" id="GO:0070971">
    <property type="term" value="C:endoplasmic reticulum exit site"/>
    <property type="evidence" value="ECO:0000250"/>
    <property type="project" value="UniProtKB"/>
</dbReference>
<dbReference type="GO" id="GO:0005789">
    <property type="term" value="C:endoplasmic reticulum membrane"/>
    <property type="evidence" value="ECO:0007669"/>
    <property type="project" value="UniProtKB-SubCell"/>
</dbReference>
<dbReference type="GO" id="GO:0005198">
    <property type="term" value="F:structural molecule activity"/>
    <property type="evidence" value="ECO:0000318"/>
    <property type="project" value="GO_Central"/>
</dbReference>
<dbReference type="GO" id="GO:0090110">
    <property type="term" value="P:COPII-coated vesicle cargo loading"/>
    <property type="evidence" value="ECO:0000318"/>
    <property type="project" value="GO_Central"/>
</dbReference>
<dbReference type="GO" id="GO:0007029">
    <property type="term" value="P:endoplasmic reticulum organization"/>
    <property type="evidence" value="ECO:0000318"/>
    <property type="project" value="GO_Central"/>
</dbReference>
<dbReference type="GO" id="GO:0015031">
    <property type="term" value="P:protein transport"/>
    <property type="evidence" value="ECO:0007669"/>
    <property type="project" value="UniProtKB-KW"/>
</dbReference>
<dbReference type="FunFam" id="1.20.940.10:FF:000001">
    <property type="entry name" value="Protein transport protein Sec31A isoform A"/>
    <property type="match status" value="1"/>
</dbReference>
<dbReference type="FunFam" id="2.130.10.10:FF:000009">
    <property type="entry name" value="Protein transport protein Sec31A isoform A"/>
    <property type="match status" value="1"/>
</dbReference>
<dbReference type="FunFam" id="1.25.40.1030:FF:000001">
    <property type="entry name" value="protein transport protein Sec31A isoform X3"/>
    <property type="match status" value="1"/>
</dbReference>
<dbReference type="Gene3D" id="1.25.40.1030">
    <property type="match status" value="1"/>
</dbReference>
<dbReference type="Gene3D" id="1.20.940.10">
    <property type="entry name" value="Functional domain of the splicing factor Prp18"/>
    <property type="match status" value="1"/>
</dbReference>
<dbReference type="Gene3D" id="2.130.10.10">
    <property type="entry name" value="YVTN repeat-like/Quinoprotein amine dehydrogenase"/>
    <property type="match status" value="1"/>
</dbReference>
<dbReference type="InterPro" id="IPR024298">
    <property type="entry name" value="Sec16_Sec23-bd"/>
</dbReference>
<dbReference type="InterPro" id="IPR040251">
    <property type="entry name" value="SEC31-like"/>
</dbReference>
<dbReference type="InterPro" id="IPR015943">
    <property type="entry name" value="WD40/YVTN_repeat-like_dom_sf"/>
</dbReference>
<dbReference type="InterPro" id="IPR036322">
    <property type="entry name" value="WD40_repeat_dom_sf"/>
</dbReference>
<dbReference type="InterPro" id="IPR001680">
    <property type="entry name" value="WD40_rpt"/>
</dbReference>
<dbReference type="PANTHER" id="PTHR13923:SF23">
    <property type="entry name" value="PROTEIN TRANSPORT PROTEIN SEC31A"/>
    <property type="match status" value="1"/>
</dbReference>
<dbReference type="PANTHER" id="PTHR13923">
    <property type="entry name" value="SEC31-RELATED PROTEIN"/>
    <property type="match status" value="1"/>
</dbReference>
<dbReference type="Pfam" id="PF12931">
    <property type="entry name" value="TPR_Sec16"/>
    <property type="match status" value="1"/>
</dbReference>
<dbReference type="Pfam" id="PF00400">
    <property type="entry name" value="WD40"/>
    <property type="match status" value="1"/>
</dbReference>
<dbReference type="SMART" id="SM00320">
    <property type="entry name" value="WD40"/>
    <property type="match status" value="6"/>
</dbReference>
<dbReference type="SUPFAM" id="SSF50978">
    <property type="entry name" value="WD40 repeat-like"/>
    <property type="match status" value="1"/>
</dbReference>
<dbReference type="PROSITE" id="PS50082">
    <property type="entry name" value="WD_REPEATS_2"/>
    <property type="match status" value="1"/>
</dbReference>
<dbReference type="PROSITE" id="PS50294">
    <property type="entry name" value="WD_REPEATS_REGION"/>
    <property type="match status" value="1"/>
</dbReference>
<organism>
    <name type="scientific">Gallus gallus</name>
    <name type="common">Chicken</name>
    <dbReference type="NCBI Taxonomy" id="9031"/>
    <lineage>
        <taxon>Eukaryota</taxon>
        <taxon>Metazoa</taxon>
        <taxon>Chordata</taxon>
        <taxon>Craniata</taxon>
        <taxon>Vertebrata</taxon>
        <taxon>Euteleostomi</taxon>
        <taxon>Archelosauria</taxon>
        <taxon>Archosauria</taxon>
        <taxon>Dinosauria</taxon>
        <taxon>Saurischia</taxon>
        <taxon>Theropoda</taxon>
        <taxon>Coelurosauria</taxon>
        <taxon>Aves</taxon>
        <taxon>Neognathae</taxon>
        <taxon>Galloanserae</taxon>
        <taxon>Galliformes</taxon>
        <taxon>Phasianidae</taxon>
        <taxon>Phasianinae</taxon>
        <taxon>Gallus</taxon>
    </lineage>
</organism>
<gene>
    <name type="primary">SEC31A</name>
    <name type="synonym">SEC31L1</name>
    <name type="ORF">RCJMB04_4i13</name>
</gene>
<feature type="chain" id="PRO_0000295151" description="Protein transport protein Sec31A">
    <location>
        <begin position="1"/>
        <end position="1227"/>
    </location>
</feature>
<feature type="repeat" description="WD 1">
    <location>
        <begin position="4"/>
        <end position="47"/>
    </location>
</feature>
<feature type="repeat" description="WD 2">
    <location>
        <begin position="64"/>
        <end position="111"/>
    </location>
</feature>
<feature type="repeat" description="WD 3">
    <location>
        <begin position="120"/>
        <end position="160"/>
    </location>
</feature>
<feature type="repeat" description="WD 4">
    <location>
        <begin position="166"/>
        <end position="206"/>
    </location>
</feature>
<feature type="repeat" description="WD 5">
    <location>
        <begin position="209"/>
        <end position="254"/>
    </location>
</feature>
<feature type="repeat" description="WD 6">
    <location>
        <begin position="258"/>
        <end position="298"/>
    </location>
</feature>
<feature type="repeat" description="WD 7">
    <location>
        <begin position="301"/>
        <end position="342"/>
    </location>
</feature>
<feature type="repeat" description="WD 8; interaction with SEC13" evidence="5">
    <location>
        <begin position="397"/>
        <end position="430"/>
    </location>
</feature>
<feature type="region of interest" description="Disordered" evidence="6">
    <location>
        <begin position="804"/>
        <end position="875"/>
    </location>
</feature>
<feature type="region of interest" description="Disordered" evidence="6">
    <location>
        <begin position="905"/>
        <end position="1008"/>
    </location>
</feature>
<feature type="region of interest" description="Disordered" evidence="6">
    <location>
        <begin position="1040"/>
        <end position="1075"/>
    </location>
</feature>
<feature type="compositionally biased region" description="Low complexity" evidence="6">
    <location>
        <begin position="905"/>
        <end position="924"/>
    </location>
</feature>
<feature type="compositionally biased region" description="Pro residues" evidence="6">
    <location>
        <begin position="925"/>
        <end position="945"/>
    </location>
</feature>
<feature type="compositionally biased region" description="Polar residues" evidence="6">
    <location>
        <begin position="995"/>
        <end position="1006"/>
    </location>
</feature>
<feature type="compositionally biased region" description="Low complexity" evidence="6">
    <location>
        <begin position="1040"/>
        <end position="1049"/>
    </location>
</feature>
<feature type="compositionally biased region" description="Polar residues" evidence="6">
    <location>
        <begin position="1057"/>
        <end position="1069"/>
    </location>
</feature>